<gene>
    <name evidence="2" type="primary">otk</name>
    <name type="ORF">GL11545</name>
</gene>
<sequence length="1035" mass="113731">MDMDVMMISMCILASTLMAPGWASTSGFLRVPQSQSIVENEAADFGCEATDPASYLHYEWLHNGREISYDKRVYRIGSHLHIEAVQREEDVGDYVCIATSLASGAREASPPAKLSVIYLESASVQLLGSNRNELLLKCHVEGASGDEPLQIEWYRDSARLASWGNVHLEEHRLLVRQPSPSDDGLYRCTASNAAGRVMSKQGYVYQANIKCLPRLLKKNQKLPESWGKQTFLCRGKRGGSGGLDQALSPAPEDLRIVQGPAGQLLIKEGDSAALSCLYELPAELQNQRIQLRWRKDGKLLRHVELGGAIPIPGHAHDSGKDALLREDARLVLHKQNGTLSFASIIASDAGQYQCQLQLEGHAPLNSSPGLLEVIEQLKFVPQPTSKNLELDAAVAKVHCKAQGTPSPQVQWLREGSLNSSLPDQVEVDINGTLIFRNVRAEHRGNYTCQARSSQGQISATVSINVVVTPKFSVPPVGPIETTEQGTVVMHCQAIGDPKPTIQWDKDLKYLSENNTDRERFSFLENGTLEIRNVQVEDEGSYGCTIGNSAGLKREDVQLVVRSTGDGFAPEETGGDGFLVTRAVLITMTVALAYIVLVVGLMLWCRYRRQARKARLNELSIKEAGGDQPDASVTNGKGSEQEPCLSKQRNGASGKPKSKSNGDAQKSDDTACSQQSRSSKKSVYEQLVLPRSGLSELLQIGRGEFGDVFVGKLKASLVAASAQSDKDADTEKQHSNSENGSGGSGSGSGSTTLSTLNEKRRSKTSMDDIEEIKEEEPEQSALEQLVLVKALNKVKDEQACQEFRRQLDLLRGISHKGVVRLFGLCREKDPHYMVLEYTDWGDLKQFLLATAGKVNTATATSSPPALTTSQVLAVAYQIARGMDAIYRSRCTHRDLATRNCVISSEFVVKVSYPALCKDKYSREYHKHRNTLLPVRWLAPECIQEDEYTTKSDIFAYGVLVWELFNQATKLPHEELTSEQVIQRSQAGTLEWTVAEATPDSLKEILLSCWLANPKERPSFSQLGSALSKAMQSVAEK</sequence>
<evidence type="ECO:0000250" key="1"/>
<evidence type="ECO:0000250" key="2">
    <source>
        <dbReference type="UniProtKB" id="Q6AWJ9"/>
    </source>
</evidence>
<evidence type="ECO:0000255" key="3"/>
<evidence type="ECO:0000255" key="4">
    <source>
        <dbReference type="PROSITE-ProRule" id="PRU00114"/>
    </source>
</evidence>
<evidence type="ECO:0000255" key="5">
    <source>
        <dbReference type="PROSITE-ProRule" id="PRU00159"/>
    </source>
</evidence>
<evidence type="ECO:0000256" key="6">
    <source>
        <dbReference type="SAM" id="MobiDB-lite"/>
    </source>
</evidence>
<evidence type="ECO:0000305" key="7"/>
<evidence type="ECO:0000312" key="8">
    <source>
        <dbReference type="EMBL" id="EDW32272.1"/>
    </source>
</evidence>
<feature type="signal peptide" evidence="3">
    <location>
        <begin position="1"/>
        <end position="23"/>
    </location>
</feature>
<feature type="chain" id="PRO_0000388689" description="Tyrosine-protein kinase-like otk" evidence="3">
    <location>
        <begin position="24"/>
        <end position="1035"/>
    </location>
</feature>
<feature type="topological domain" description="Extracellular" evidence="3">
    <location>
        <begin position="24"/>
        <end position="582"/>
    </location>
</feature>
<feature type="transmembrane region" description="Helical" evidence="3">
    <location>
        <begin position="583"/>
        <end position="603"/>
    </location>
</feature>
<feature type="topological domain" description="Cytoplasmic" evidence="3">
    <location>
        <begin position="604"/>
        <end position="1035"/>
    </location>
</feature>
<feature type="domain" description="Ig-like C2-type 1" evidence="3">
    <location>
        <begin position="24"/>
        <end position="109"/>
    </location>
</feature>
<feature type="domain" description="Ig-like C2-type 2" evidence="3">
    <location>
        <begin position="110"/>
        <end position="199"/>
    </location>
</feature>
<feature type="domain" description="Ig-like C2-type 3" evidence="3">
    <location>
        <begin position="251"/>
        <end position="365"/>
    </location>
</feature>
<feature type="domain" description="Ig-like C2-type 4" evidence="3">
    <location>
        <begin position="368"/>
        <end position="464"/>
    </location>
</feature>
<feature type="domain" description="Ig-like C2-type 5" evidence="3">
    <location>
        <begin position="469"/>
        <end position="559"/>
    </location>
</feature>
<feature type="domain" description="Protein kinase; inactive" evidence="5 7">
    <location>
        <begin position="693"/>
        <end position="1029"/>
    </location>
</feature>
<feature type="region of interest" description="Disordered" evidence="6">
    <location>
        <begin position="623"/>
        <end position="683"/>
    </location>
</feature>
<feature type="region of interest" description="Disordered" evidence="6">
    <location>
        <begin position="721"/>
        <end position="775"/>
    </location>
</feature>
<feature type="compositionally biased region" description="Polar residues" evidence="6">
    <location>
        <begin position="658"/>
        <end position="676"/>
    </location>
</feature>
<feature type="compositionally biased region" description="Basic and acidic residues" evidence="6">
    <location>
        <begin position="723"/>
        <end position="734"/>
    </location>
</feature>
<feature type="compositionally biased region" description="Acidic residues" evidence="6">
    <location>
        <begin position="766"/>
        <end position="775"/>
    </location>
</feature>
<feature type="modified residue" description="Phosphoserine" evidence="2">
    <location>
        <position position="681"/>
    </location>
</feature>
<feature type="glycosylation site" description="N-linked (GlcNAc...) asparagine" evidence="3">
    <location>
        <position position="336"/>
    </location>
</feature>
<feature type="glycosylation site" description="N-linked (GlcNAc...) asparagine" evidence="3">
    <location>
        <position position="418"/>
    </location>
</feature>
<feature type="glycosylation site" description="N-linked (GlcNAc...) asparagine" evidence="3">
    <location>
        <position position="430"/>
    </location>
</feature>
<feature type="glycosylation site" description="N-linked (GlcNAc...) asparagine" evidence="3">
    <location>
        <position position="445"/>
    </location>
</feature>
<feature type="glycosylation site" description="N-linked (GlcNAc...) asparagine" evidence="3">
    <location>
        <position position="513"/>
    </location>
</feature>
<feature type="glycosylation site" description="N-linked (GlcNAc...) asparagine" evidence="3">
    <location>
        <position position="525"/>
    </location>
</feature>
<feature type="disulfide bond" evidence="4">
    <location>
        <begin position="47"/>
        <end position="96"/>
    </location>
</feature>
<feature type="disulfide bond" evidence="4">
    <location>
        <begin position="138"/>
        <end position="188"/>
    </location>
</feature>
<feature type="disulfide bond" evidence="4">
    <location>
        <begin position="276"/>
        <end position="354"/>
    </location>
</feature>
<feature type="disulfide bond" evidence="4">
    <location>
        <begin position="399"/>
        <end position="448"/>
    </location>
</feature>
<feature type="disulfide bond" evidence="4">
    <location>
        <begin position="491"/>
        <end position="543"/>
    </location>
</feature>
<reference evidence="8" key="1">
    <citation type="journal article" date="2007" name="Nature">
        <title>Evolution of genes and genomes on the Drosophila phylogeny.</title>
        <authorList>
            <consortium name="Drosophila 12 genomes consortium"/>
        </authorList>
    </citation>
    <scope>NUCLEOTIDE SEQUENCE [LARGE SCALE GENOMIC DNA]</scope>
    <source>
        <strain>MSH-3 / Tucson 14011-0111.49</strain>
    </source>
</reference>
<keyword id="KW-0130">Cell adhesion</keyword>
<keyword id="KW-1003">Cell membrane</keyword>
<keyword id="KW-1015">Disulfide bond</keyword>
<keyword id="KW-0325">Glycoprotein</keyword>
<keyword id="KW-0393">Immunoglobulin domain</keyword>
<keyword id="KW-0472">Membrane</keyword>
<keyword id="KW-0524">Neurogenesis</keyword>
<keyword id="KW-0597">Phosphoprotein</keyword>
<keyword id="KW-0675">Receptor</keyword>
<keyword id="KW-1185">Reference proteome</keyword>
<keyword id="KW-0677">Repeat</keyword>
<keyword id="KW-0732">Signal</keyword>
<keyword id="KW-0812">Transmembrane</keyword>
<keyword id="KW-1133">Transmembrane helix</keyword>
<proteinExistence type="inferred from homology"/>
<protein>
    <recommendedName>
        <fullName evidence="2">Tyrosine-protein kinase-like otk</fullName>
    </recommendedName>
    <alternativeName>
        <fullName>Tyrosine-protein kinase-like 7 homolog</fullName>
    </alternativeName>
</protein>
<comment type="function">
    <text evidence="1">Acts as a calcium-dependent, homophilic cell adhesion molecule that regulates neural recognition during the development of the nervous system. Component of the repulsive Plexin signaling response to regulate motor axon guidance at the embryonic stage. Also component of a receptor complex that is required in the adult visual system to innervate the lamina layer; specific targeting of R1-R6 axons (By similarity).</text>
</comment>
<comment type="subunit">
    <text evidence="1">Interacts with plexA; component of a receptor complex that mediates the repulsive signaling in response to Semaphorin ligands.</text>
</comment>
<comment type="subcellular location">
    <subcellularLocation>
        <location evidence="2">Cell membrane</location>
        <topology evidence="2">Single-pass type I membrane protein</topology>
    </subcellularLocation>
</comment>
<comment type="similarity">
    <text evidence="5">Belongs to the protein kinase superfamily. Tyr protein kinase family. Insulin receptor subfamily.</text>
</comment>
<comment type="caution">
    <text evidence="7">The D.melanogaster ortholog of this protein has been proposed to undergo autophosphorylation on tyrosine residues which is induced in response to cell adhesion (PubMed:1371458). However as mammalian orthologs of this protein seem to lack kinase activity it may be that this protein associates with, and is phosphorylated by, an unknown active tyrosine kinase.</text>
</comment>
<organism>
    <name type="scientific">Drosophila persimilis</name>
    <name type="common">Fruit fly</name>
    <dbReference type="NCBI Taxonomy" id="7234"/>
    <lineage>
        <taxon>Eukaryota</taxon>
        <taxon>Metazoa</taxon>
        <taxon>Ecdysozoa</taxon>
        <taxon>Arthropoda</taxon>
        <taxon>Hexapoda</taxon>
        <taxon>Insecta</taxon>
        <taxon>Pterygota</taxon>
        <taxon>Neoptera</taxon>
        <taxon>Endopterygota</taxon>
        <taxon>Diptera</taxon>
        <taxon>Brachycera</taxon>
        <taxon>Muscomorpha</taxon>
        <taxon>Ephydroidea</taxon>
        <taxon>Drosophilidae</taxon>
        <taxon>Drosophila</taxon>
        <taxon>Sophophora</taxon>
    </lineage>
</organism>
<accession>B4GBH0</accession>
<dbReference type="EMBL" id="CH479181">
    <property type="protein sequence ID" value="EDW32272.1"/>
    <property type="molecule type" value="Genomic_DNA"/>
</dbReference>
<dbReference type="SMR" id="B4GBH0"/>
<dbReference type="STRING" id="7234.B4GBH0"/>
<dbReference type="GlyCosmos" id="B4GBH0">
    <property type="glycosylation" value="6 sites, No reported glycans"/>
</dbReference>
<dbReference type="EnsemblMetazoa" id="FBtr0177160">
    <property type="protein sequence ID" value="FBpp0175652"/>
    <property type="gene ID" value="FBgn0149154"/>
</dbReference>
<dbReference type="EnsemblMetazoa" id="XM_002016346.2">
    <property type="protein sequence ID" value="XP_002016382.1"/>
    <property type="gene ID" value="LOC6589898"/>
</dbReference>
<dbReference type="GeneID" id="6589898"/>
<dbReference type="KEGG" id="dpe:6589898"/>
<dbReference type="CTD" id="36283"/>
<dbReference type="eggNOG" id="KOG1026">
    <property type="taxonomic scope" value="Eukaryota"/>
</dbReference>
<dbReference type="eggNOG" id="KOG4475">
    <property type="taxonomic scope" value="Eukaryota"/>
</dbReference>
<dbReference type="HOGENOM" id="CLU_012268_0_0_1"/>
<dbReference type="OMA" id="SHLHIEA"/>
<dbReference type="OrthoDB" id="2413561at2759"/>
<dbReference type="PhylomeDB" id="B4GBH0"/>
<dbReference type="ChiTaRS" id="otk">
    <property type="organism name" value="fly"/>
</dbReference>
<dbReference type="Proteomes" id="UP000008744">
    <property type="component" value="Unassembled WGS sequence"/>
</dbReference>
<dbReference type="GO" id="GO:0030424">
    <property type="term" value="C:axon"/>
    <property type="evidence" value="ECO:0007669"/>
    <property type="project" value="EnsemblMetazoa"/>
</dbReference>
<dbReference type="GO" id="GO:0005886">
    <property type="term" value="C:plasma membrane"/>
    <property type="evidence" value="ECO:0000250"/>
    <property type="project" value="UniProtKB"/>
</dbReference>
<dbReference type="GO" id="GO:0043235">
    <property type="term" value="C:receptor complex"/>
    <property type="evidence" value="ECO:0007669"/>
    <property type="project" value="TreeGrafter"/>
</dbReference>
<dbReference type="GO" id="GO:0005524">
    <property type="term" value="F:ATP binding"/>
    <property type="evidence" value="ECO:0007669"/>
    <property type="project" value="InterPro"/>
</dbReference>
<dbReference type="GO" id="GO:0050839">
    <property type="term" value="F:cell adhesion molecule binding"/>
    <property type="evidence" value="ECO:0000250"/>
    <property type="project" value="UniProtKB"/>
</dbReference>
<dbReference type="GO" id="GO:0046982">
    <property type="term" value="F:protein heterodimerization activity"/>
    <property type="evidence" value="ECO:0007669"/>
    <property type="project" value="EnsemblMetazoa"/>
</dbReference>
<dbReference type="GO" id="GO:0042803">
    <property type="term" value="F:protein homodimerization activity"/>
    <property type="evidence" value="ECO:0007669"/>
    <property type="project" value="EnsemblMetazoa"/>
</dbReference>
<dbReference type="GO" id="GO:0004672">
    <property type="term" value="F:protein kinase activity"/>
    <property type="evidence" value="ECO:0000250"/>
    <property type="project" value="UniProtKB"/>
</dbReference>
<dbReference type="GO" id="GO:0038023">
    <property type="term" value="F:signaling receptor activity"/>
    <property type="evidence" value="ECO:0000250"/>
    <property type="project" value="UniProtKB"/>
</dbReference>
<dbReference type="GO" id="GO:0004714">
    <property type="term" value="F:transmembrane receptor protein tyrosine kinase activity"/>
    <property type="evidence" value="ECO:0007669"/>
    <property type="project" value="EnsemblMetazoa"/>
</dbReference>
<dbReference type="GO" id="GO:0017147">
    <property type="term" value="F:Wnt-protein binding"/>
    <property type="evidence" value="ECO:0007669"/>
    <property type="project" value="EnsemblMetazoa"/>
</dbReference>
<dbReference type="GO" id="GO:0007155">
    <property type="term" value="P:cell adhesion"/>
    <property type="evidence" value="ECO:0000250"/>
    <property type="project" value="UniProtKB"/>
</dbReference>
<dbReference type="GO" id="GO:0007169">
    <property type="term" value="P:cell surface receptor protein tyrosine kinase signaling pathway"/>
    <property type="evidence" value="ECO:0007669"/>
    <property type="project" value="TreeGrafter"/>
</dbReference>
<dbReference type="GO" id="GO:0048804">
    <property type="term" value="P:imaginal disc-derived female genitalia morphogenesis"/>
    <property type="evidence" value="ECO:0007669"/>
    <property type="project" value="EnsemblMetazoa"/>
</dbReference>
<dbReference type="GO" id="GO:0048803">
    <property type="term" value="P:imaginal disc-derived male genitalia morphogenesis"/>
    <property type="evidence" value="ECO:0007669"/>
    <property type="project" value="EnsemblMetazoa"/>
</dbReference>
<dbReference type="GO" id="GO:0035260">
    <property type="term" value="P:internal genitalia morphogenesis"/>
    <property type="evidence" value="ECO:0007669"/>
    <property type="project" value="EnsemblMetazoa"/>
</dbReference>
<dbReference type="GO" id="GO:0090090">
    <property type="term" value="P:negative regulation of canonical Wnt signaling pathway"/>
    <property type="evidence" value="ECO:0007669"/>
    <property type="project" value="EnsemblMetazoa"/>
</dbReference>
<dbReference type="GO" id="GO:0072499">
    <property type="term" value="P:photoreceptor cell axon guidance"/>
    <property type="evidence" value="ECO:0007669"/>
    <property type="project" value="EnsemblMetazoa"/>
</dbReference>
<dbReference type="GO" id="GO:0010976">
    <property type="term" value="P:positive regulation of neuron projection development"/>
    <property type="evidence" value="ECO:0007669"/>
    <property type="project" value="TreeGrafter"/>
</dbReference>
<dbReference type="GO" id="GO:0051897">
    <property type="term" value="P:positive regulation of phosphatidylinositol 3-kinase/protein kinase B signal transduction"/>
    <property type="evidence" value="ECO:0007669"/>
    <property type="project" value="TreeGrafter"/>
</dbReference>
<dbReference type="GO" id="GO:0031290">
    <property type="term" value="P:retinal ganglion cell axon guidance"/>
    <property type="evidence" value="ECO:0000250"/>
    <property type="project" value="UniProtKB"/>
</dbReference>
<dbReference type="CDD" id="cd00096">
    <property type="entry name" value="Ig"/>
    <property type="match status" value="2"/>
</dbReference>
<dbReference type="FunFam" id="1.10.510.10:FF:000954">
    <property type="entry name" value="Tyrosine-protein kinase-like otk"/>
    <property type="match status" value="1"/>
</dbReference>
<dbReference type="FunFam" id="2.60.40.10:FF:001805">
    <property type="entry name" value="Tyrosine-protein kinase-like otk"/>
    <property type="match status" value="1"/>
</dbReference>
<dbReference type="FunFam" id="2.60.40.10:FF:002027">
    <property type="entry name" value="Tyrosine-protein kinase-like otk"/>
    <property type="match status" value="1"/>
</dbReference>
<dbReference type="FunFam" id="2.60.40.10:FF:002086">
    <property type="entry name" value="Tyrosine-protein kinase-like otk"/>
    <property type="match status" value="1"/>
</dbReference>
<dbReference type="FunFam" id="2.60.40.10:FF:002809">
    <property type="entry name" value="Tyrosine-protein kinase-like otk"/>
    <property type="match status" value="1"/>
</dbReference>
<dbReference type="FunFam" id="3.30.200.20:FF:001776">
    <property type="entry name" value="Tyrosine-protein kinase-like otk"/>
    <property type="match status" value="1"/>
</dbReference>
<dbReference type="FunFam" id="2.60.40.10:FF:002127">
    <property type="entry name" value="tyrosine-protein kinase-like otk"/>
    <property type="match status" value="1"/>
</dbReference>
<dbReference type="Gene3D" id="2.60.40.10">
    <property type="entry name" value="Immunoglobulins"/>
    <property type="match status" value="5"/>
</dbReference>
<dbReference type="Gene3D" id="1.10.510.10">
    <property type="entry name" value="Transferase(Phosphotransferase) domain 1"/>
    <property type="match status" value="1"/>
</dbReference>
<dbReference type="InterPro" id="IPR007110">
    <property type="entry name" value="Ig-like_dom"/>
</dbReference>
<dbReference type="InterPro" id="IPR036179">
    <property type="entry name" value="Ig-like_dom_sf"/>
</dbReference>
<dbReference type="InterPro" id="IPR013783">
    <property type="entry name" value="Ig-like_fold"/>
</dbReference>
<dbReference type="InterPro" id="IPR013098">
    <property type="entry name" value="Ig_I-set"/>
</dbReference>
<dbReference type="InterPro" id="IPR003599">
    <property type="entry name" value="Ig_sub"/>
</dbReference>
<dbReference type="InterPro" id="IPR003598">
    <property type="entry name" value="Ig_sub2"/>
</dbReference>
<dbReference type="InterPro" id="IPR013106">
    <property type="entry name" value="Ig_V-set"/>
</dbReference>
<dbReference type="InterPro" id="IPR011009">
    <property type="entry name" value="Kinase-like_dom_sf"/>
</dbReference>
<dbReference type="InterPro" id="IPR000719">
    <property type="entry name" value="Prot_kinase_dom"/>
</dbReference>
<dbReference type="InterPro" id="IPR050122">
    <property type="entry name" value="RTK"/>
</dbReference>
<dbReference type="InterPro" id="IPR001245">
    <property type="entry name" value="Ser-Thr/Tyr_kinase_cat_dom"/>
</dbReference>
<dbReference type="InterPro" id="IPR008266">
    <property type="entry name" value="Tyr_kinase_AS"/>
</dbReference>
<dbReference type="InterPro" id="IPR020635">
    <property type="entry name" value="Tyr_kinase_cat_dom"/>
</dbReference>
<dbReference type="PANTHER" id="PTHR24416">
    <property type="entry name" value="TYROSINE-PROTEIN KINASE RECEPTOR"/>
    <property type="match status" value="1"/>
</dbReference>
<dbReference type="PANTHER" id="PTHR24416:SF349">
    <property type="entry name" value="TYROSINE-PROTEIN KINASE RYK"/>
    <property type="match status" value="1"/>
</dbReference>
<dbReference type="Pfam" id="PF07679">
    <property type="entry name" value="I-set"/>
    <property type="match status" value="2"/>
</dbReference>
<dbReference type="Pfam" id="PF13927">
    <property type="entry name" value="Ig_3"/>
    <property type="match status" value="2"/>
</dbReference>
<dbReference type="Pfam" id="PF07714">
    <property type="entry name" value="PK_Tyr_Ser-Thr"/>
    <property type="match status" value="1"/>
</dbReference>
<dbReference type="PIRSF" id="PIRSF000615">
    <property type="entry name" value="TyrPK_CSF1-R"/>
    <property type="match status" value="1"/>
</dbReference>
<dbReference type="PRINTS" id="PR00109">
    <property type="entry name" value="TYRKINASE"/>
</dbReference>
<dbReference type="SMART" id="SM00409">
    <property type="entry name" value="IG"/>
    <property type="match status" value="5"/>
</dbReference>
<dbReference type="SMART" id="SM00408">
    <property type="entry name" value="IGc2"/>
    <property type="match status" value="5"/>
</dbReference>
<dbReference type="SMART" id="SM00406">
    <property type="entry name" value="IGv"/>
    <property type="match status" value="3"/>
</dbReference>
<dbReference type="SMART" id="SM00219">
    <property type="entry name" value="TyrKc"/>
    <property type="match status" value="1"/>
</dbReference>
<dbReference type="SUPFAM" id="SSF48726">
    <property type="entry name" value="Immunoglobulin"/>
    <property type="match status" value="4"/>
</dbReference>
<dbReference type="SUPFAM" id="SSF56112">
    <property type="entry name" value="Protein kinase-like (PK-like)"/>
    <property type="match status" value="1"/>
</dbReference>
<dbReference type="PROSITE" id="PS50835">
    <property type="entry name" value="IG_LIKE"/>
    <property type="match status" value="5"/>
</dbReference>
<dbReference type="PROSITE" id="PS50011">
    <property type="entry name" value="PROTEIN_KINASE_DOM"/>
    <property type="match status" value="1"/>
</dbReference>
<dbReference type="PROSITE" id="PS00109">
    <property type="entry name" value="PROTEIN_KINASE_TYR"/>
    <property type="match status" value="1"/>
</dbReference>
<name>PTK7_DROPE</name>